<evidence type="ECO:0000250" key="1"/>
<evidence type="ECO:0000250" key="2">
    <source>
        <dbReference type="UniProtKB" id="P53349"/>
    </source>
</evidence>
<evidence type="ECO:0000255" key="3">
    <source>
        <dbReference type="PROSITE-ProRule" id="PRU00159"/>
    </source>
</evidence>
<evidence type="ECO:0000255" key="4">
    <source>
        <dbReference type="PROSITE-ProRule" id="PRU00175"/>
    </source>
</evidence>
<evidence type="ECO:0000255" key="5">
    <source>
        <dbReference type="PROSITE-ProRule" id="PRU00325"/>
    </source>
</evidence>
<evidence type="ECO:0000255" key="6">
    <source>
        <dbReference type="PROSITE-ProRule" id="PRU10027"/>
    </source>
</evidence>
<evidence type="ECO:0000256" key="7">
    <source>
        <dbReference type="SAM" id="MobiDB-lite"/>
    </source>
</evidence>
<evidence type="ECO:0000269" key="8">
    <source>
    </source>
</evidence>
<evidence type="ECO:0000269" key="9">
    <source>
    </source>
</evidence>
<evidence type="ECO:0000269" key="10">
    <source>
    </source>
</evidence>
<evidence type="ECO:0000269" key="11">
    <source>
    </source>
</evidence>
<evidence type="ECO:0000269" key="12">
    <source>
    </source>
</evidence>
<evidence type="ECO:0000269" key="13">
    <source>
    </source>
</evidence>
<evidence type="ECO:0000269" key="14">
    <source>
    </source>
</evidence>
<evidence type="ECO:0000269" key="15">
    <source>
    </source>
</evidence>
<evidence type="ECO:0000305" key="16"/>
<evidence type="ECO:0007744" key="17">
    <source>
    </source>
</evidence>
<evidence type="ECO:0007744" key="18">
    <source>
    </source>
</evidence>
<evidence type="ECO:0007744" key="19">
    <source>
    </source>
</evidence>
<evidence type="ECO:0007744" key="20">
    <source>
    </source>
</evidence>
<evidence type="ECO:0007744" key="21">
    <source>
    </source>
</evidence>
<evidence type="ECO:0007744" key="22">
    <source>
    </source>
</evidence>
<evidence type="ECO:0007829" key="23">
    <source>
        <dbReference type="PDB" id="6WHB"/>
    </source>
</evidence>
<sequence length="1512" mass="164470">MAAAAGNRASSSGFPGARATSPEAGGGGGALKASSAPAAAAGLLREAGSGGRERADWRRRQLRKVRSVELDQLPEQPLFLAASPPASSTSPSPEPADAAGSGTGFQPVAVPPPHGAASRGGAHLTESVAAPDSGASSPAAAEPGEKRAPAAEPSPAAAPAGREMENKETLKGLHKMDDRPEERMIREKLKATCMPAWKHEWLERRNRRGPVVVKPIPVKGDGSEMNHLAAESPGEVQASAASPASKGRRSPSPGNSPSGRTVKSESPGVRRKRVSPVPFQSGRITPPRRAPSPDGFSPYSPEETNRRVNKVMRARLYLLQQIGPNSFLIGGDSPDNKYRVFIGPQNCSCARGTFCIHLLFVMLRVFQLEPSDPMLWRKTLKNFEVESLFQKYHSRRSSRIKAPSRNTIQKFVSRMSNSHTLSSSSTSTSSSENSIKDEEEQMCPICLLGMLDEESLTVCEDGCRNKLHHHCMSIWAEECRRNREPLICPLCRSKWRSHDFYSHELSSPVDSPSSLRAAQQQTVQQQPLAGSRRNQESNFNLTHYGTQQIPPAYKDLAEPWIQVFGMELVGCLFSRNWNVREMALRRLSHDVSGALLLANGESTGNSGGSSGSSPSGGATSGSSQTSISGDVVEACCSVLSMVCADPVYKVYVAALKTLRAMLVYTPCHSLAERIKLQRLLQPVVDTILVKCADANSRTSQLSISTLLELCKGQAGELAVGREILKAGSIGIGGVDYVLNCILGNQTESNNWQELLGRLCLIDRLLLEFPAEFYPHIVSTDVSQAEPVEIRYKKLLSLLTFALQSIDNSHSMVGKLSRRIYLSSARMVTTVPHVFSKLLEMLSVSSSTHFTRMRRRLMAIADEVEIAEAIQLGVEDTLDGQQDSFLQASVPNNYLETTENSSPECTVHLEKTGKGLCATKLSASSEDISERLASISVGPSSSTTTTTTTTEQPKPMVQTKGRPHSQCLNSSPLSHHSQLMFPALSTPSSSTPSVPAGTATDVSKHRLQGFIPCRIPSASPQTQRKFSLQFHRNCPENKDSDKLSPVFTQSRPLPSSNIHRPKPSRPTPGNTSKQGDPSKNSMTLDLNSSSKCDDSFGCSSNSSNAVIPSDETVFTPVEEKCRLDVNTELNSSIEDLLEASMPSSDTTVTFKSEVAVLSPEKAENDDTYKDDVNHNQKCKEKMEAEEEEALAIAMAMSASQDALPIVPQLQVENGEDIIIIQQDTPETLPGHTKAKQPYREDTEWLKGQQIGLGAFSSCYQAQDVGTGTLMAVKQVTYVRNTSSEQEEVVEALREEIRMMSHLNHPNIIRMLGATCEKSNYNLFIEWMAGGSVAHLLSKYGAFKESVVINYTEQLLRGLSYLHENQIIHRDVKGANLLIDSTGQRLRIADFGAAARLASKGTGAGEFQGQLLGTIAFMAPEVLRGQQYGRSCDVWSVGCAIIEMACAKPPWNAEKHSNHLALIFKIASATTAPSIPSHLSPGLRDVALRCLELQPQDRPPSRELLKHPVFRTTW</sequence>
<proteinExistence type="evidence at protein level"/>
<comment type="function">
    <text evidence="12 15">Component of a protein kinase signal transduction cascade (PubMed:9808624). Activates the ERK and JNK kinase pathways by phosphorylation of MAP2K1 and MAP2K4 (PubMed:9808624). May phosphorylate the MAPK8/JNK1 kinase (PubMed:17761173). Activates CHUK and IKBKB, the central protein kinases of the NF-kappa-B pathway (PubMed:9808624).</text>
</comment>
<comment type="catalytic activity">
    <reaction>
        <text>L-seryl-[protein] + ATP = O-phospho-L-seryl-[protein] + ADP + H(+)</text>
        <dbReference type="Rhea" id="RHEA:17989"/>
        <dbReference type="Rhea" id="RHEA-COMP:9863"/>
        <dbReference type="Rhea" id="RHEA-COMP:11604"/>
        <dbReference type="ChEBI" id="CHEBI:15378"/>
        <dbReference type="ChEBI" id="CHEBI:29999"/>
        <dbReference type="ChEBI" id="CHEBI:30616"/>
        <dbReference type="ChEBI" id="CHEBI:83421"/>
        <dbReference type="ChEBI" id="CHEBI:456216"/>
        <dbReference type="EC" id="2.7.11.25"/>
    </reaction>
</comment>
<comment type="catalytic activity">
    <reaction>
        <text>L-threonyl-[protein] + ATP = O-phospho-L-threonyl-[protein] + ADP + H(+)</text>
        <dbReference type="Rhea" id="RHEA:46608"/>
        <dbReference type="Rhea" id="RHEA-COMP:11060"/>
        <dbReference type="Rhea" id="RHEA-COMP:11605"/>
        <dbReference type="ChEBI" id="CHEBI:15378"/>
        <dbReference type="ChEBI" id="CHEBI:30013"/>
        <dbReference type="ChEBI" id="CHEBI:30616"/>
        <dbReference type="ChEBI" id="CHEBI:61977"/>
        <dbReference type="ChEBI" id="CHEBI:456216"/>
        <dbReference type="EC" id="2.7.11.25"/>
    </reaction>
</comment>
<comment type="catalytic activity">
    <reaction evidence="10">
        <text>S-ubiquitinyl-[E2 ubiquitin-conjugating enzyme]-L-cysteine + [acceptor protein]-L-lysine = [E2 ubiquitin-conjugating enzyme]-L-cysteine + N(6)-ubiquitinyl-[acceptor protein]-L-lysine.</text>
        <dbReference type="EC" id="2.3.2.27"/>
    </reaction>
</comment>
<comment type="cofactor">
    <cofactor>
        <name>Mg(2+)</name>
        <dbReference type="ChEBI" id="CHEBI:18420"/>
    </cofactor>
</comment>
<comment type="activity regulation">
    <text>Activated by autophosphorylation on Thr-1400 and Thr-1412 following oligomerization.</text>
</comment>
<comment type="subunit">
    <text evidence="8 9 12 13 15">Binds both upstream activators and downstream substrates in multimolecular complexes through its N-terminus (PubMed:9808624). Oligomerizes after binding MAP2K4 or TRAF2 (PubMed:9808624). Interacts with AXIN1 (PubMed:12223491, PubMed:15262978). Interacts (via the kinase catalytic domain) with STK38 (PubMed:17906693). Interacts with GRIPAP1 (PubMed:17761173).</text>
</comment>
<comment type="interaction">
    <interactant intactId="EBI-49776">
        <id>Q13233</id>
    </interactant>
    <interactant intactId="EBI-365980">
        <id>P15056</id>
        <label>BRAF</label>
    </interactant>
    <organismsDiffer>false</organismsDiffer>
    <experiments>2</experiments>
</comment>
<comment type="interaction">
    <interactant intactId="EBI-49776">
        <id>Q13233</id>
    </interactant>
    <interactant intactId="EBI-359808">
        <id>P61962</id>
        <label>DCAF7</label>
    </interactant>
    <organismsDiffer>false</organismsDiffer>
    <experiments>7</experiments>
</comment>
<comment type="interaction">
    <interactant intactId="EBI-49776">
        <id>Q13233</id>
    </interactant>
    <interactant intactId="EBI-352089">
        <id>O75369</id>
        <label>FLNB</label>
    </interactant>
    <organismsDiffer>false</organismsDiffer>
    <experiments>2</experiments>
</comment>
<comment type="interaction">
    <interactant intactId="EBI-49776">
        <id>Q13233</id>
    </interactant>
    <interactant intactId="EBI-447868">
        <id>P45985</id>
        <label>MAP2K4</label>
    </interactant>
    <organismsDiffer>false</organismsDiffer>
    <experiments>3</experiments>
</comment>
<comment type="interaction">
    <interactant intactId="EBI-49776">
        <id>Q13233</id>
    </interactant>
    <interactant intactId="EBI-49783">
        <id>Q12851</id>
        <label>MAP4K2</label>
    </interactant>
    <organismsDiffer>false</organismsDiffer>
    <experiments>2</experiments>
</comment>
<comment type="PTM">
    <text evidence="1">Autophosphorylated.</text>
</comment>
<comment type="disease" evidence="14">
    <disease id="DI-03052">
        <name>46,XY sex reversal 6</name>
        <acronym>SRXY6</acronym>
        <description>A disorder of sex development. Affected individuals have a 46,XY karyotype but present as phenotypically normal females.</description>
        <dbReference type="MIM" id="613762"/>
    </disease>
    <text>The disease is caused by variants affecting the gene represented in this entry.</text>
</comment>
<comment type="similarity">
    <text evidence="16">Belongs to the protein kinase superfamily. STE Ser/Thr protein kinase family. MAP kinase kinase kinase subfamily.</text>
</comment>
<keyword id="KW-0002">3D-structure</keyword>
<keyword id="KW-0007">Acetylation</keyword>
<keyword id="KW-0067">ATP-binding</keyword>
<keyword id="KW-0418">Kinase</keyword>
<keyword id="KW-0460">Magnesium</keyword>
<keyword id="KW-0479">Metal-binding</keyword>
<keyword id="KW-0547">Nucleotide-binding</keyword>
<keyword id="KW-0597">Phosphoprotein</keyword>
<keyword id="KW-1267">Proteomics identification</keyword>
<keyword id="KW-1185">Reference proteome</keyword>
<keyword id="KW-0723">Serine/threonine-protein kinase</keyword>
<keyword id="KW-0808">Transferase</keyword>
<keyword id="KW-0862">Zinc</keyword>
<keyword id="KW-0863">Zinc-finger</keyword>
<organism>
    <name type="scientific">Homo sapiens</name>
    <name type="common">Human</name>
    <dbReference type="NCBI Taxonomy" id="9606"/>
    <lineage>
        <taxon>Eukaryota</taxon>
        <taxon>Metazoa</taxon>
        <taxon>Chordata</taxon>
        <taxon>Craniata</taxon>
        <taxon>Vertebrata</taxon>
        <taxon>Euteleostomi</taxon>
        <taxon>Mammalia</taxon>
        <taxon>Eutheria</taxon>
        <taxon>Euarchontoglires</taxon>
        <taxon>Primates</taxon>
        <taxon>Haplorrhini</taxon>
        <taxon>Catarrhini</taxon>
        <taxon>Hominidae</taxon>
        <taxon>Homo</taxon>
    </lineage>
</organism>
<name>M3K1_HUMAN</name>
<gene>
    <name type="primary">MAP3K1</name>
    <name type="synonym">MAPKKK1</name>
    <name type="synonym">MEKK</name>
    <name type="synonym">MEKK1</name>
</gene>
<protein>
    <recommendedName>
        <fullName>Mitogen-activated protein kinase kinase kinase 1</fullName>
        <ecNumber>2.7.11.25</ecNumber>
    </recommendedName>
    <alternativeName>
        <fullName>MAPK/ERK kinase kinase 1</fullName>
        <shortName>MEK kinase 1</shortName>
        <shortName>MEKK 1</shortName>
        <ecNumber evidence="10">2.3.2.27</ecNumber>
    </alternativeName>
</protein>
<dbReference type="EC" id="2.7.11.25"/>
<dbReference type="EC" id="2.3.2.27" evidence="10"/>
<dbReference type="EMBL" id="AC008937">
    <property type="status" value="NOT_ANNOTATED_CDS"/>
    <property type="molecule type" value="Genomic_DNA"/>
</dbReference>
<dbReference type="EMBL" id="AF042838">
    <property type="protein sequence ID" value="AAC97073.1"/>
    <property type="molecule type" value="mRNA"/>
</dbReference>
<dbReference type="EMBL" id="U29671">
    <property type="protein sequence ID" value="AAB05828.1"/>
    <property type="molecule type" value="Genomic_DNA"/>
</dbReference>
<dbReference type="CCDS" id="CCDS43318.1"/>
<dbReference type="PIR" id="G01887">
    <property type="entry name" value="G01887"/>
</dbReference>
<dbReference type="RefSeq" id="NP_005912.1">
    <property type="nucleotide sequence ID" value="NM_005921.2"/>
</dbReference>
<dbReference type="PDB" id="6WHB">
    <property type="method" value="X-ray"/>
    <property type="resolution" value="1.90 A"/>
    <property type="chains" value="A=542-888"/>
</dbReference>
<dbReference type="PDBsum" id="6WHB"/>
<dbReference type="SMR" id="Q13233"/>
<dbReference type="BioGRID" id="110378">
    <property type="interactions" value="157"/>
</dbReference>
<dbReference type="DIP" id="DIP-27520N"/>
<dbReference type="ELM" id="Q13233"/>
<dbReference type="FunCoup" id="Q13233">
    <property type="interactions" value="2233"/>
</dbReference>
<dbReference type="IntAct" id="Q13233">
    <property type="interactions" value="46"/>
</dbReference>
<dbReference type="MINT" id="Q13233"/>
<dbReference type="STRING" id="9606.ENSP00000382423"/>
<dbReference type="BindingDB" id="Q13233"/>
<dbReference type="ChEMBL" id="CHEMBL3956"/>
<dbReference type="DrugBank" id="DB06061">
    <property type="generic name" value="AZD-8330"/>
</dbReference>
<dbReference type="DrugBank" id="DB12429">
    <property type="generic name" value="CI-1040"/>
</dbReference>
<dbReference type="DrugBank" id="DB12010">
    <property type="generic name" value="Fostamatinib"/>
</dbReference>
<dbReference type="DrugBank" id="DB17060">
    <property type="generic name" value="U-0126"/>
</dbReference>
<dbReference type="DrugCentral" id="Q13233"/>
<dbReference type="GuidetoPHARMACOLOGY" id="2069"/>
<dbReference type="GlyCosmos" id="Q13233">
    <property type="glycosylation" value="1 site, 1 glycan"/>
</dbReference>
<dbReference type="GlyGen" id="Q13233">
    <property type="glycosylation" value="7 sites, 1 O-linked glycan (5 sites)"/>
</dbReference>
<dbReference type="iPTMnet" id="Q13233"/>
<dbReference type="PhosphoSitePlus" id="Q13233"/>
<dbReference type="BioMuta" id="MAP3K1"/>
<dbReference type="DMDM" id="218512139"/>
<dbReference type="CPTAC" id="CPTAC-1046"/>
<dbReference type="CPTAC" id="CPTAC-824"/>
<dbReference type="CPTAC" id="CPTAC-825"/>
<dbReference type="CPTAC" id="CPTAC-826"/>
<dbReference type="CPTAC" id="CPTAC-827"/>
<dbReference type="CPTAC" id="CPTAC-829"/>
<dbReference type="CPTAC" id="CPTAC-830"/>
<dbReference type="CPTAC" id="CPTAC-831"/>
<dbReference type="CPTAC" id="CPTAC-832"/>
<dbReference type="jPOST" id="Q13233"/>
<dbReference type="MassIVE" id="Q13233"/>
<dbReference type="PaxDb" id="9606-ENSP00000382423"/>
<dbReference type="PeptideAtlas" id="Q13233"/>
<dbReference type="ProteomicsDB" id="59240"/>
<dbReference type="Pumba" id="Q13233"/>
<dbReference type="Antibodypedia" id="3855">
    <property type="antibodies" value="457 antibodies from 36 providers"/>
</dbReference>
<dbReference type="DNASU" id="4214"/>
<dbReference type="Ensembl" id="ENST00000399503.4">
    <property type="protein sequence ID" value="ENSP00000382423.3"/>
    <property type="gene ID" value="ENSG00000095015.6"/>
</dbReference>
<dbReference type="GeneID" id="4214"/>
<dbReference type="KEGG" id="hsa:4214"/>
<dbReference type="MANE-Select" id="ENST00000399503.4">
    <property type="protein sequence ID" value="ENSP00000382423.3"/>
    <property type="RefSeq nucleotide sequence ID" value="NM_005921.2"/>
    <property type="RefSeq protein sequence ID" value="NP_005912.1"/>
</dbReference>
<dbReference type="UCSC" id="uc003jqw.5">
    <property type="organism name" value="human"/>
</dbReference>
<dbReference type="AGR" id="HGNC:6848"/>
<dbReference type="CTD" id="4214"/>
<dbReference type="DisGeNET" id="4214"/>
<dbReference type="GeneCards" id="MAP3K1"/>
<dbReference type="GeneReviews" id="MAP3K1"/>
<dbReference type="HGNC" id="HGNC:6848">
    <property type="gene designation" value="MAP3K1"/>
</dbReference>
<dbReference type="HPA" id="ENSG00000095015">
    <property type="expression patterns" value="Low tissue specificity"/>
</dbReference>
<dbReference type="MalaCards" id="MAP3K1"/>
<dbReference type="MIM" id="600982">
    <property type="type" value="gene"/>
</dbReference>
<dbReference type="MIM" id="613762">
    <property type="type" value="phenotype"/>
</dbReference>
<dbReference type="neXtProt" id="NX_Q13233"/>
<dbReference type="OpenTargets" id="ENSG00000095015"/>
<dbReference type="Orphanet" id="242">
    <property type="disease" value="46,XY complete gonadal dysgenesis"/>
</dbReference>
<dbReference type="Orphanet" id="251510">
    <property type="disease" value="46,XY partial gonadal dysgenesis"/>
</dbReference>
<dbReference type="PharmGKB" id="PA30592"/>
<dbReference type="VEuPathDB" id="HostDB:ENSG00000095015"/>
<dbReference type="eggNOG" id="KOG0198">
    <property type="taxonomic scope" value="Eukaryota"/>
</dbReference>
<dbReference type="GeneTree" id="ENSGT00940000159154"/>
<dbReference type="HOGENOM" id="CLU_005805_0_0_1"/>
<dbReference type="InParanoid" id="Q13233"/>
<dbReference type="OMA" id="CHSQTIF"/>
<dbReference type="OrthoDB" id="1269963at2759"/>
<dbReference type="PAN-GO" id="Q13233">
    <property type="GO annotations" value="2 GO annotations based on evolutionary models"/>
</dbReference>
<dbReference type="PhylomeDB" id="Q13233"/>
<dbReference type="TreeFam" id="TF105112"/>
<dbReference type="BRENDA" id="2.7.11.25">
    <property type="organism ID" value="2681"/>
</dbReference>
<dbReference type="PathwayCommons" id="Q13233"/>
<dbReference type="Reactome" id="R-HSA-166058">
    <property type="pathway name" value="MyD88:MAL(TIRAP) cascade initiated on plasma membrane"/>
</dbReference>
<dbReference type="Reactome" id="R-HSA-2871796">
    <property type="pathway name" value="FCERI mediated MAPK activation"/>
</dbReference>
<dbReference type="Reactome" id="R-HSA-933542">
    <property type="pathway name" value="TRAF6 mediated NF-kB activation"/>
</dbReference>
<dbReference type="Reactome" id="R-HSA-975138">
    <property type="pathway name" value="TRAF6 mediated induction of NFkB and MAP kinases upon TLR7/8 or 9 activation"/>
</dbReference>
<dbReference type="Reactome" id="R-HSA-975871">
    <property type="pathway name" value="MyD88 cascade initiated on plasma membrane"/>
</dbReference>
<dbReference type="SignaLink" id="Q13233"/>
<dbReference type="SIGNOR" id="Q13233"/>
<dbReference type="BioGRID-ORCS" id="4214">
    <property type="hits" value="13 hits in 1199 CRISPR screens"/>
</dbReference>
<dbReference type="ChiTaRS" id="MAP3K1">
    <property type="organism name" value="human"/>
</dbReference>
<dbReference type="GeneWiki" id="MAP3K1"/>
<dbReference type="GenomeRNAi" id="4214"/>
<dbReference type="Pharos" id="Q13233">
    <property type="development level" value="Tchem"/>
</dbReference>
<dbReference type="PRO" id="PR:Q13233"/>
<dbReference type="Proteomes" id="UP000005640">
    <property type="component" value="Chromosome 5"/>
</dbReference>
<dbReference type="RNAct" id="Q13233">
    <property type="molecule type" value="protein"/>
</dbReference>
<dbReference type="Bgee" id="ENSG00000095015">
    <property type="expression patterns" value="Expressed in buccal mucosa cell and 188 other cell types or tissues"/>
</dbReference>
<dbReference type="GO" id="GO:0005737">
    <property type="term" value="C:cytoplasm"/>
    <property type="evidence" value="ECO:0000318"/>
    <property type="project" value="GO_Central"/>
</dbReference>
<dbReference type="GO" id="GO:0005829">
    <property type="term" value="C:cytosol"/>
    <property type="evidence" value="ECO:0000304"/>
    <property type="project" value="Reactome"/>
</dbReference>
<dbReference type="GO" id="GO:0070160">
    <property type="term" value="C:tight junction"/>
    <property type="evidence" value="ECO:0000314"/>
    <property type="project" value="MGI"/>
</dbReference>
<dbReference type="GO" id="GO:0005524">
    <property type="term" value="F:ATP binding"/>
    <property type="evidence" value="ECO:0007669"/>
    <property type="project" value="UniProtKB-KW"/>
</dbReference>
<dbReference type="GO" id="GO:0004709">
    <property type="term" value="F:MAP kinase kinase kinase activity"/>
    <property type="evidence" value="ECO:0000304"/>
    <property type="project" value="Reactome"/>
</dbReference>
<dbReference type="GO" id="GO:0004672">
    <property type="term" value="F:protein kinase activity"/>
    <property type="evidence" value="ECO:0000314"/>
    <property type="project" value="MGI"/>
</dbReference>
<dbReference type="GO" id="GO:0019901">
    <property type="term" value="F:protein kinase binding"/>
    <property type="evidence" value="ECO:0000353"/>
    <property type="project" value="UniProtKB"/>
</dbReference>
<dbReference type="GO" id="GO:0106310">
    <property type="term" value="F:protein serine kinase activity"/>
    <property type="evidence" value="ECO:0007669"/>
    <property type="project" value="RHEA"/>
</dbReference>
<dbReference type="GO" id="GO:0004674">
    <property type="term" value="F:protein serine/threonine kinase activity"/>
    <property type="evidence" value="ECO:0000269"/>
    <property type="project" value="Reactome"/>
</dbReference>
<dbReference type="GO" id="GO:0008270">
    <property type="term" value="F:zinc ion binding"/>
    <property type="evidence" value="ECO:0007669"/>
    <property type="project" value="UniProtKB-KW"/>
</dbReference>
<dbReference type="GO" id="GO:0071260">
    <property type="term" value="P:cellular response to mechanical stimulus"/>
    <property type="evidence" value="ECO:0000270"/>
    <property type="project" value="UniProtKB"/>
</dbReference>
<dbReference type="GO" id="GO:0038095">
    <property type="term" value="P:Fc-epsilon receptor signaling pathway"/>
    <property type="evidence" value="ECO:0000304"/>
    <property type="project" value="Reactome"/>
</dbReference>
<dbReference type="GO" id="GO:0006468">
    <property type="term" value="P:protein phosphorylation"/>
    <property type="evidence" value="ECO:0000303"/>
    <property type="project" value="UniProtKB"/>
</dbReference>
<dbReference type="CDD" id="cd16494">
    <property type="entry name" value="RING-CH-C4HC3_ZSWM2"/>
    <property type="match status" value="1"/>
</dbReference>
<dbReference type="CDD" id="cd06630">
    <property type="entry name" value="STKc_MEKK1"/>
    <property type="match status" value="1"/>
</dbReference>
<dbReference type="FunFam" id="1.10.510.10:FF:000286">
    <property type="entry name" value="Mitogen-activated protein kinase kinase kinase 1 (Predicted)"/>
    <property type="match status" value="1"/>
</dbReference>
<dbReference type="FunFam" id="1.25.10.10:FF:000122">
    <property type="entry name" value="Mitogen-activated protein kinase kinase kinase 1 (Predicted)"/>
    <property type="match status" value="1"/>
</dbReference>
<dbReference type="FunFam" id="3.30.40.10:FF:000223">
    <property type="entry name" value="Mitogen-activated protein kinase kinase kinase 1 (Predicted)"/>
    <property type="match status" value="1"/>
</dbReference>
<dbReference type="Gene3D" id="1.25.10.10">
    <property type="entry name" value="Leucine-rich Repeat Variant"/>
    <property type="match status" value="1"/>
</dbReference>
<dbReference type="Gene3D" id="1.10.510.10">
    <property type="entry name" value="Transferase(Phosphotransferase) domain 1"/>
    <property type="match status" value="1"/>
</dbReference>
<dbReference type="Gene3D" id="3.30.40.10">
    <property type="entry name" value="Zinc/RING finger domain, C3HC4 (zinc finger)"/>
    <property type="match status" value="1"/>
</dbReference>
<dbReference type="InterPro" id="IPR011989">
    <property type="entry name" value="ARM-like"/>
</dbReference>
<dbReference type="InterPro" id="IPR016024">
    <property type="entry name" value="ARM-type_fold"/>
</dbReference>
<dbReference type="InterPro" id="IPR011009">
    <property type="entry name" value="Kinase-like_dom_sf"/>
</dbReference>
<dbReference type="InterPro" id="IPR050538">
    <property type="entry name" value="MAP_kinase_kinase_kinase"/>
</dbReference>
<dbReference type="InterPro" id="IPR000719">
    <property type="entry name" value="Prot_kinase_dom"/>
</dbReference>
<dbReference type="InterPro" id="IPR017441">
    <property type="entry name" value="Protein_kinase_ATP_BS"/>
</dbReference>
<dbReference type="InterPro" id="IPR008271">
    <property type="entry name" value="Ser/Thr_kinase_AS"/>
</dbReference>
<dbReference type="InterPro" id="IPR001841">
    <property type="entry name" value="Znf_RING"/>
</dbReference>
<dbReference type="InterPro" id="IPR013083">
    <property type="entry name" value="Znf_RING/FYVE/PHD"/>
</dbReference>
<dbReference type="InterPro" id="IPR007527">
    <property type="entry name" value="Znf_SWIM"/>
</dbReference>
<dbReference type="PANTHER" id="PTHR48016">
    <property type="entry name" value="MAP KINASE KINASE KINASE SSK2-RELATED-RELATED"/>
    <property type="match status" value="1"/>
</dbReference>
<dbReference type="Pfam" id="PF21040">
    <property type="entry name" value="CEP104-like_TOG"/>
    <property type="match status" value="1"/>
</dbReference>
<dbReference type="Pfam" id="PF00069">
    <property type="entry name" value="Pkinase"/>
    <property type="match status" value="1"/>
</dbReference>
<dbReference type="Pfam" id="PF04434">
    <property type="entry name" value="SWIM"/>
    <property type="match status" value="1"/>
</dbReference>
<dbReference type="SMART" id="SM00220">
    <property type="entry name" value="S_TKc"/>
    <property type="match status" value="1"/>
</dbReference>
<dbReference type="SUPFAM" id="SSF48371">
    <property type="entry name" value="ARM repeat"/>
    <property type="match status" value="1"/>
</dbReference>
<dbReference type="SUPFAM" id="SSF56112">
    <property type="entry name" value="Protein kinase-like (PK-like)"/>
    <property type="match status" value="1"/>
</dbReference>
<dbReference type="SUPFAM" id="SSF57850">
    <property type="entry name" value="RING/U-box"/>
    <property type="match status" value="1"/>
</dbReference>
<dbReference type="PROSITE" id="PS00107">
    <property type="entry name" value="PROTEIN_KINASE_ATP"/>
    <property type="match status" value="1"/>
</dbReference>
<dbReference type="PROSITE" id="PS50011">
    <property type="entry name" value="PROTEIN_KINASE_DOM"/>
    <property type="match status" value="1"/>
</dbReference>
<dbReference type="PROSITE" id="PS00108">
    <property type="entry name" value="PROTEIN_KINASE_ST"/>
    <property type="match status" value="1"/>
</dbReference>
<dbReference type="PROSITE" id="PS50089">
    <property type="entry name" value="ZF_RING_2"/>
    <property type="match status" value="1"/>
</dbReference>
<dbReference type="PROSITE" id="PS50966">
    <property type="entry name" value="ZF_SWIM"/>
    <property type="match status" value="1"/>
</dbReference>
<accession>Q13233</accession>
<reference key="1">
    <citation type="journal article" date="2004" name="Nature">
        <title>The DNA sequence and comparative analysis of human chromosome 5.</title>
        <authorList>
            <person name="Schmutz J."/>
            <person name="Martin J."/>
            <person name="Terry A."/>
            <person name="Couronne O."/>
            <person name="Grimwood J."/>
            <person name="Lowry S."/>
            <person name="Gordon L.A."/>
            <person name="Scott D."/>
            <person name="Xie G."/>
            <person name="Huang W."/>
            <person name="Hellsten U."/>
            <person name="Tran-Gyamfi M."/>
            <person name="She X."/>
            <person name="Prabhakar S."/>
            <person name="Aerts A."/>
            <person name="Altherr M."/>
            <person name="Bajorek E."/>
            <person name="Black S."/>
            <person name="Branscomb E."/>
            <person name="Caoile C."/>
            <person name="Challacombe J.F."/>
            <person name="Chan Y.M."/>
            <person name="Denys M."/>
            <person name="Detter J.C."/>
            <person name="Escobar J."/>
            <person name="Flowers D."/>
            <person name="Fotopulos D."/>
            <person name="Glavina T."/>
            <person name="Gomez M."/>
            <person name="Gonzales E."/>
            <person name="Goodstein D."/>
            <person name="Grigoriev I."/>
            <person name="Groza M."/>
            <person name="Hammon N."/>
            <person name="Hawkins T."/>
            <person name="Haydu L."/>
            <person name="Israni S."/>
            <person name="Jett J."/>
            <person name="Kadner K."/>
            <person name="Kimball H."/>
            <person name="Kobayashi A."/>
            <person name="Lopez F."/>
            <person name="Lou Y."/>
            <person name="Martinez D."/>
            <person name="Medina C."/>
            <person name="Morgan J."/>
            <person name="Nandkeshwar R."/>
            <person name="Noonan J.P."/>
            <person name="Pitluck S."/>
            <person name="Pollard M."/>
            <person name="Predki P."/>
            <person name="Priest J."/>
            <person name="Ramirez L."/>
            <person name="Retterer J."/>
            <person name="Rodriguez A."/>
            <person name="Rogers S."/>
            <person name="Salamov A."/>
            <person name="Salazar A."/>
            <person name="Thayer N."/>
            <person name="Tice H."/>
            <person name="Tsai M."/>
            <person name="Ustaszewska A."/>
            <person name="Vo N."/>
            <person name="Wheeler J."/>
            <person name="Wu K."/>
            <person name="Yang J."/>
            <person name="Dickson M."/>
            <person name="Cheng J.-F."/>
            <person name="Eichler E.E."/>
            <person name="Olsen A."/>
            <person name="Pennacchio L.A."/>
            <person name="Rokhsar D.S."/>
            <person name="Richardson P."/>
            <person name="Lucas S.M."/>
            <person name="Myers R.M."/>
            <person name="Rubin E.M."/>
        </authorList>
    </citation>
    <scope>NUCLEOTIDE SEQUENCE [LARGE SCALE GENOMIC DNA]</scope>
</reference>
<reference key="2">
    <citation type="journal article" date="1998" name="Genes Dev.">
        <title>JNKK1 organizes a MAP kinase module through specific and sequential interactions with upstream and downstream components mediated by its amino-terminal extension.</title>
        <authorList>
            <person name="Xia Y."/>
            <person name="Wu Z."/>
            <person name="Su B."/>
            <person name="Murray B."/>
            <person name="Karin M."/>
        </authorList>
    </citation>
    <scope>NUCLEOTIDE SEQUENCE [MRNA] OF 20-1512</scope>
    <scope>FUNCTION</scope>
    <scope>INTERACTION WITH MAP2K4</scope>
</reference>
<reference key="3">
    <citation type="journal article" date="1995" name="Mamm. Genome">
        <title>Mapping of the MEK kinase gene (Mekk) to mouse chromosome 13 and human chromosome 5.</title>
        <authorList>
            <person name="Vinik B.S."/>
            <person name="Kay E.S."/>
            <person name="Fiedorek F.T. Jr."/>
        </authorList>
    </citation>
    <scope>NUCLEOTIDE SEQUENCE [GENOMIC DNA] OF 1238-1274</scope>
    <source>
        <tissue>Leukocyte</tissue>
    </source>
</reference>
<reference key="4">
    <citation type="journal article" date="2002" name="J. Biol. Chem.">
        <title>SUMO-1 modification of the C-terminal KVEKVD of Axin is required for JNK activation but has no effect on Wnt signaling.</title>
        <authorList>
            <person name="Rui H.L."/>
            <person name="Fan E."/>
            <person name="Zhou H.M."/>
            <person name="Xu Z."/>
            <person name="Zhang Y."/>
            <person name="Lin S.C."/>
        </authorList>
    </citation>
    <scope>INTERACTION WITH AXIN1</scope>
</reference>
<reference key="5">
    <citation type="journal article" date="2002" name="Mol. Cell">
        <title>The PHD domain of MEKK1 acts as an E3 ubiquitin ligase and mediates ubiquitination and degradation of ERK1/2.</title>
        <authorList>
            <person name="Lu Z."/>
            <person name="Xu S."/>
            <person name="Joazeiro C."/>
            <person name="Cobb M.H."/>
            <person name="Hunter T."/>
        </authorList>
    </citation>
    <scope>FUNCTION</scope>
    <scope>CATALYTIC ACTIVITY</scope>
</reference>
<reference key="6">
    <citation type="journal article" date="2004" name="J. Biol. Chem.">
        <title>The DIX domain protein coiled-coil-DIX1 inhibits c-Jun N-terminal kinase activation by Axin and dishevelled through distinct mechanisms.</title>
        <authorList>
            <person name="Wong C.K."/>
            <person name="Luo W."/>
            <person name="Deng Y."/>
            <person name="Zou H."/>
            <person name="Ye Z."/>
            <person name="Lin S.-C."/>
        </authorList>
    </citation>
    <scope>INTERACTION WITH AXIN1</scope>
</reference>
<reference key="7">
    <citation type="journal article" date="2007" name="FEBS Lett.">
        <title>GRASP-1 is a neuronal scaffold protein for the JNK signaling pathway.</title>
        <authorList>
            <person name="Ye B."/>
            <person name="Yu W.P."/>
            <person name="Thomas G.M."/>
            <person name="Huganir R.L."/>
        </authorList>
    </citation>
    <scope>FUNCTION</scope>
    <scope>INTERACTION WITH GRIPAP1</scope>
</reference>
<reference key="8">
    <citation type="journal article" date="2008" name="J. Proteome Res.">
        <title>Combining protein-based IMAC, peptide-based IMAC, and MudPIT for efficient phosphoproteomic analysis.</title>
        <authorList>
            <person name="Cantin G.T."/>
            <person name="Yi W."/>
            <person name="Lu B."/>
            <person name="Park S.K."/>
            <person name="Xu T."/>
            <person name="Lee J.-D."/>
            <person name="Yates J.R. III"/>
        </authorList>
    </citation>
    <scope>PHOSPHORYLATION [LARGE SCALE ANALYSIS] AT SER-292</scope>
    <scope>IDENTIFICATION BY MASS SPECTROMETRY [LARGE SCALE ANALYSIS]</scope>
    <source>
        <tissue>Cervix carcinoma</tissue>
    </source>
</reference>
<reference key="9">
    <citation type="journal article" date="2008" name="Mol. Cell">
        <title>Kinase-selective enrichment enables quantitative phosphoproteomics of the kinome across the cell cycle.</title>
        <authorList>
            <person name="Daub H."/>
            <person name="Olsen J.V."/>
            <person name="Bairlein M."/>
            <person name="Gnad F."/>
            <person name="Oppermann F.S."/>
            <person name="Korner R."/>
            <person name="Greff Z."/>
            <person name="Keri G."/>
            <person name="Stemmann O."/>
            <person name="Mann M."/>
        </authorList>
    </citation>
    <scope>PHOSPHORYLATION [LARGE SCALE ANALYSIS] AT SER-154 AND SER-1043</scope>
    <scope>IDENTIFICATION BY MASS SPECTROMETRY [LARGE SCALE ANALYSIS]</scope>
    <source>
        <tissue>Cervix carcinoma</tissue>
    </source>
</reference>
<reference key="10">
    <citation type="journal article" date="2008" name="Oncogene">
        <title>Negative regulation of MEKK1/2 signaling by serine-threonine kinase 38 (STK38).</title>
        <authorList>
            <person name="Enomoto A."/>
            <person name="Kido N."/>
            <person name="Ito M."/>
            <person name="Morita A."/>
            <person name="Matsumoto Y."/>
            <person name="Takamatsu N."/>
            <person name="Hosoi Y."/>
            <person name="Miyagawa K."/>
        </authorList>
    </citation>
    <scope>INTERACTION WITH STK38</scope>
</reference>
<reference key="11">
    <citation type="journal article" date="2008" name="Proc. Natl. Acad. Sci. U.S.A.">
        <title>A quantitative atlas of mitotic phosphorylation.</title>
        <authorList>
            <person name="Dephoure N."/>
            <person name="Zhou C."/>
            <person name="Villen J."/>
            <person name="Beausoleil S.A."/>
            <person name="Bakalarski C.E."/>
            <person name="Elledge S.J."/>
            <person name="Gygi S.P."/>
        </authorList>
    </citation>
    <scope>PHOSPHORYLATION [LARGE SCALE ANALYSIS] AT SER-292; SER-297; SER-300; SER-507 AND SER-1018</scope>
    <scope>IDENTIFICATION BY MASS SPECTROMETRY [LARGE SCALE ANALYSIS]</scope>
    <source>
        <tissue>Cervix carcinoma</tissue>
    </source>
</reference>
<reference key="12">
    <citation type="journal article" date="2009" name="Anal. Chem.">
        <title>Lys-N and trypsin cover complementary parts of the phosphoproteome in a refined SCX-based approach.</title>
        <authorList>
            <person name="Gauci S."/>
            <person name="Helbig A.O."/>
            <person name="Slijper M."/>
            <person name="Krijgsveld J."/>
            <person name="Heck A.J."/>
            <person name="Mohammed S."/>
        </authorList>
    </citation>
    <scope>ACETYLATION [LARGE SCALE ANALYSIS] AT ALA-2</scope>
    <scope>CLEAVAGE OF INITIATOR METHIONINE [LARGE SCALE ANALYSIS]</scope>
    <scope>IDENTIFICATION BY MASS SPECTROMETRY [LARGE SCALE ANALYSIS]</scope>
</reference>
<reference key="13">
    <citation type="journal article" date="2009" name="Mol. Cell. Proteomics">
        <title>Large-scale proteomics analysis of the human kinome.</title>
        <authorList>
            <person name="Oppermann F.S."/>
            <person name="Gnad F."/>
            <person name="Olsen J.V."/>
            <person name="Hornberger R."/>
            <person name="Greff Z."/>
            <person name="Keri G."/>
            <person name="Mann M."/>
            <person name="Daub H."/>
        </authorList>
    </citation>
    <scope>PHOSPHORYLATION [LARGE SCALE ANALYSIS] AT SER-275 AND SER-292</scope>
    <scope>IDENTIFICATION BY MASS SPECTROMETRY [LARGE SCALE ANALYSIS]</scope>
</reference>
<reference key="14">
    <citation type="journal article" date="2013" name="J. Proteome Res.">
        <title>Toward a comprehensive characterization of a human cancer cell phosphoproteome.</title>
        <authorList>
            <person name="Zhou H."/>
            <person name="Di Palma S."/>
            <person name="Preisinger C."/>
            <person name="Peng M."/>
            <person name="Polat A.N."/>
            <person name="Heck A.J."/>
            <person name="Mohammed S."/>
        </authorList>
    </citation>
    <scope>PHOSPHORYLATION [LARGE SCALE ANALYSIS] AT SER-21; SER-35; SER-275; THR-285; SER-292; SER-531; SER-923 AND SER-1018</scope>
    <scope>IDENTIFICATION BY MASS SPECTROMETRY [LARGE SCALE ANALYSIS]</scope>
    <source>
        <tissue>Cervix carcinoma</tissue>
        <tissue>Erythroleukemia</tissue>
    </source>
</reference>
<reference key="15">
    <citation type="journal article" date="2007" name="Mol. Cell. Biol.">
        <title>MEKK1 mediates the ubiquitination and degradation of c-Jun in response to osmotic stress.</title>
        <authorList>
            <person name="Xia Y."/>
            <person name="Wang J."/>
            <person name="Xu S."/>
            <person name="Johnson G.L."/>
            <person name="Hunter T."/>
            <person name="Lu Z."/>
        </authorList>
    </citation>
    <scope>FUNCTION</scope>
    <scope>CATALYTIC ACTIVITY</scope>
</reference>
<reference key="16">
    <citation type="journal article" date="2007" name="Nature">
        <title>Patterns of somatic mutation in human cancer genomes.</title>
        <authorList>
            <person name="Greenman C."/>
            <person name="Stephens P."/>
            <person name="Smith R."/>
            <person name="Dalgliesh G.L."/>
            <person name="Hunter C."/>
            <person name="Bignell G."/>
            <person name="Davies H."/>
            <person name="Teague J."/>
            <person name="Butler A."/>
            <person name="Stevens C."/>
            <person name="Edkins S."/>
            <person name="O'Meara S."/>
            <person name="Vastrik I."/>
            <person name="Schmidt E.E."/>
            <person name="Avis T."/>
            <person name="Barthorpe S."/>
            <person name="Bhamra G."/>
            <person name="Buck G."/>
            <person name="Choudhury B."/>
            <person name="Clements J."/>
            <person name="Cole J."/>
            <person name="Dicks E."/>
            <person name="Forbes S."/>
            <person name="Gray K."/>
            <person name="Halliday K."/>
            <person name="Harrison R."/>
            <person name="Hills K."/>
            <person name="Hinton J."/>
            <person name="Jenkinson A."/>
            <person name="Jones D."/>
            <person name="Menzies A."/>
            <person name="Mironenko T."/>
            <person name="Perry J."/>
            <person name="Raine K."/>
            <person name="Richardson D."/>
            <person name="Shepherd R."/>
            <person name="Small A."/>
            <person name="Tofts C."/>
            <person name="Varian J."/>
            <person name="Webb T."/>
            <person name="West S."/>
            <person name="Widaa S."/>
            <person name="Yates A."/>
            <person name="Cahill D.P."/>
            <person name="Louis D.N."/>
            <person name="Goldstraw P."/>
            <person name="Nicholson A.G."/>
            <person name="Brasseur F."/>
            <person name="Looijenga L."/>
            <person name="Weber B.L."/>
            <person name="Chiew Y.-E."/>
            <person name="DeFazio A."/>
            <person name="Greaves M.F."/>
            <person name="Green A.R."/>
            <person name="Campbell P."/>
            <person name="Birney E."/>
            <person name="Easton D.F."/>
            <person name="Chenevix-Trench G."/>
            <person name="Tan M.-H."/>
            <person name="Khoo S.K."/>
            <person name="Teh B.T."/>
            <person name="Yuen S.T."/>
            <person name="Leung S.Y."/>
            <person name="Wooster R."/>
            <person name="Futreal P.A."/>
            <person name="Stratton M.R."/>
        </authorList>
    </citation>
    <scope>VARIANTS [LARGE SCALE ANALYSIS] ASN-92 AND SER-443</scope>
</reference>
<reference key="17">
    <citation type="journal article" date="2010" name="Am. J. Hum. Genet.">
        <title>Mutations in MAP3K1 cause 46,XY disorders of sex development and implicate a common signal transduction pathway in human testis determination.</title>
        <authorList>
            <person name="Pearlman A."/>
            <person name="Loke J."/>
            <person name="Le Caignec C."/>
            <person name="White S."/>
            <person name="Chin L."/>
            <person name="Friedman A."/>
            <person name="Warr N."/>
            <person name="Willan J."/>
            <person name="Brauer D."/>
            <person name="Farmer C."/>
            <person name="Brooks E."/>
            <person name="Oddoux C."/>
            <person name="Riley B."/>
            <person name="Shajahan S."/>
            <person name="Camerino G."/>
            <person name="Homfray T."/>
            <person name="Crosby A.H."/>
            <person name="Couper J."/>
            <person name="David A."/>
            <person name="Greenfield A."/>
            <person name="Sinclair A."/>
            <person name="Ostrer H."/>
        </authorList>
    </citation>
    <scope>VARIANTS SRXY6 PRO-189; ARG-189; ILE-GLN-211 INS AND ARG-616</scope>
    <scope>CHARACTERIZATION OF VARIANTS SRXY6 PRO-189 AND ARG-189</scope>
</reference>
<feature type="initiator methionine" description="Removed" evidence="21">
    <location>
        <position position="1"/>
    </location>
</feature>
<feature type="chain" id="PRO_0000086240" description="Mitogen-activated protein kinase kinase kinase 1">
    <location>
        <begin position="2"/>
        <end position="1512"/>
    </location>
</feature>
<feature type="domain" description="Protein kinase" evidence="3">
    <location>
        <begin position="1243"/>
        <end position="1508"/>
    </location>
</feature>
<feature type="zinc finger region" description="SWIM-type" evidence="5">
    <location>
        <begin position="338"/>
        <end position="366"/>
    </location>
</feature>
<feature type="zinc finger region" description="RING-type" evidence="4">
    <location>
        <begin position="443"/>
        <end position="492"/>
    </location>
</feature>
<feature type="region of interest" description="Disordered" evidence="7">
    <location>
        <begin position="1"/>
        <end position="37"/>
    </location>
</feature>
<feature type="region of interest" description="Disordered" evidence="7">
    <location>
        <begin position="67"/>
        <end position="181"/>
    </location>
</feature>
<feature type="region of interest" description="Disordered" evidence="7">
    <location>
        <begin position="213"/>
        <end position="304"/>
    </location>
</feature>
<feature type="region of interest" description="Disordered" evidence="7">
    <location>
        <begin position="416"/>
        <end position="436"/>
    </location>
</feature>
<feature type="region of interest" description="Disordered" evidence="7">
    <location>
        <begin position="511"/>
        <end position="532"/>
    </location>
</feature>
<feature type="region of interest" description="Disordered" evidence="7">
    <location>
        <begin position="602"/>
        <end position="624"/>
    </location>
</feature>
<feature type="region of interest" description="Disordered" evidence="7">
    <location>
        <begin position="933"/>
        <end position="972"/>
    </location>
</feature>
<feature type="region of interest" description="Disordered" evidence="7">
    <location>
        <begin position="1032"/>
        <end position="1087"/>
    </location>
</feature>
<feature type="compositionally biased region" description="Low complexity" evidence="7">
    <location>
        <begin position="1"/>
        <end position="13"/>
    </location>
</feature>
<feature type="compositionally biased region" description="Low complexity" evidence="7">
    <location>
        <begin position="81"/>
        <end position="99"/>
    </location>
</feature>
<feature type="compositionally biased region" description="Low complexity" evidence="7">
    <location>
        <begin position="129"/>
        <end position="142"/>
    </location>
</feature>
<feature type="compositionally biased region" description="Low complexity" evidence="7">
    <location>
        <begin position="150"/>
        <end position="160"/>
    </location>
</feature>
<feature type="compositionally biased region" description="Basic and acidic residues" evidence="7">
    <location>
        <begin position="162"/>
        <end position="181"/>
    </location>
</feature>
<feature type="compositionally biased region" description="Low complexity" evidence="7">
    <location>
        <begin position="250"/>
        <end position="260"/>
    </location>
</feature>
<feature type="compositionally biased region" description="Low complexity" evidence="7">
    <location>
        <begin position="416"/>
        <end position="433"/>
    </location>
</feature>
<feature type="compositionally biased region" description="Low complexity" evidence="7">
    <location>
        <begin position="611"/>
        <end position="624"/>
    </location>
</feature>
<feature type="compositionally biased region" description="Low complexity" evidence="7">
    <location>
        <begin position="939"/>
        <end position="949"/>
    </location>
</feature>
<feature type="compositionally biased region" description="Basic and acidic residues" evidence="7">
    <location>
        <begin position="1032"/>
        <end position="1041"/>
    </location>
</feature>
<feature type="compositionally biased region" description="Polar residues" evidence="7">
    <location>
        <begin position="1045"/>
        <end position="1057"/>
    </location>
</feature>
<feature type="compositionally biased region" description="Polar residues" evidence="7">
    <location>
        <begin position="1066"/>
        <end position="1087"/>
    </location>
</feature>
<feature type="active site" description="Proton acceptor" evidence="3 6">
    <location>
        <position position="1369"/>
    </location>
</feature>
<feature type="binding site" evidence="3">
    <location>
        <begin position="1249"/>
        <end position="1257"/>
    </location>
    <ligand>
        <name>ATP</name>
        <dbReference type="ChEBI" id="CHEBI:30616"/>
    </ligand>
</feature>
<feature type="binding site" evidence="3">
    <location>
        <position position="1272"/>
    </location>
    <ligand>
        <name>ATP</name>
        <dbReference type="ChEBI" id="CHEBI:30616"/>
    </ligand>
</feature>
<feature type="modified residue" description="N-acetylalanine" evidence="21">
    <location>
        <position position="2"/>
    </location>
</feature>
<feature type="modified residue" description="Phosphoserine" evidence="22">
    <location>
        <position position="21"/>
    </location>
</feature>
<feature type="modified residue" description="Phosphoserine" evidence="22">
    <location>
        <position position="35"/>
    </location>
</feature>
<feature type="modified residue" description="Phosphoserine" evidence="2">
    <location>
        <position position="137"/>
    </location>
</feature>
<feature type="modified residue" description="Phosphoserine" evidence="19">
    <location>
        <position position="154"/>
    </location>
</feature>
<feature type="modified residue" description="Phosphoserine" evidence="20 22">
    <location>
        <position position="275"/>
    </location>
</feature>
<feature type="modified residue" description="Phosphothreonine" evidence="22">
    <location>
        <position position="285"/>
    </location>
</feature>
<feature type="modified residue" description="Phosphoserine" evidence="17 18 20 22">
    <location>
        <position position="292"/>
    </location>
</feature>
<feature type="modified residue" description="Phosphoserine" evidence="18">
    <location>
        <position position="297"/>
    </location>
</feature>
<feature type="modified residue" description="Phosphoserine" evidence="18">
    <location>
        <position position="300"/>
    </location>
</feature>
<feature type="modified residue" description="Phosphoserine" evidence="18">
    <location>
        <position position="507"/>
    </location>
</feature>
<feature type="modified residue" description="Phosphoserine" evidence="22">
    <location>
        <position position="531"/>
    </location>
</feature>
<feature type="modified residue" description="Phosphoserine" evidence="22">
    <location>
        <position position="923"/>
    </location>
</feature>
<feature type="modified residue" description="Phosphoserine" evidence="18 22">
    <location>
        <position position="1018"/>
    </location>
</feature>
<feature type="modified residue" description="Phosphoserine" evidence="19">
    <location>
        <position position="1043"/>
    </location>
</feature>
<feature type="modified residue" description="Phosphothreonine; by autocatalysis" evidence="2">
    <location>
        <position position="1400"/>
    </location>
</feature>
<feature type="modified residue" description="Phosphothreonine; by autocatalysis" evidence="2">
    <location>
        <position position="1412"/>
    </location>
</feature>
<feature type="sequence variant" id="VAR_040680" evidence="11">
    <original>S</original>
    <variation>N</variation>
    <location>
        <position position="92"/>
    </location>
</feature>
<feature type="sequence variant" id="VAR_065504" description="In SRXY6; increases phosphorylation of the downstream target MAPK3/MAPK1 compared to wild-type and enhances binding of RHOA to the mutant MAP3K1 complex; dbSNP:rs387906788." evidence="14">
    <original>L</original>
    <variation>P</variation>
    <location>
        <position position="189"/>
    </location>
</feature>
<feature type="sequence variant" id="VAR_065505" description="In SRXY6; increases phosphorylation of the downstream targets MAPK14 and MAPK3/MAPK1 compared to wild-type and enhances binding of RHOA to the mutant MAP3K1 complex; dbSNP:rs387906788." evidence="14">
    <original>L</original>
    <variation>R</variation>
    <location>
        <position position="189"/>
    </location>
</feature>
<feature type="sequence variant" id="VAR_065506" description="In SRXY6.">
    <original>V</original>
    <variation>VIQ</variation>
    <location>
        <position position="211"/>
    </location>
</feature>
<feature type="sequence variant" id="VAR_040681" evidence="11">
    <original>C</original>
    <variation>S</variation>
    <location>
        <position position="443"/>
    </location>
</feature>
<feature type="sequence variant" id="VAR_065507" description="In SRXY6; uncertain significance; dbSNP:rs143853590." evidence="14">
    <original>G</original>
    <variation>R</variation>
    <location>
        <position position="616"/>
    </location>
</feature>
<feature type="sequence variant" id="VAR_051636" description="In dbSNP:rs702689.">
    <original>D</original>
    <variation>N</variation>
    <location>
        <position position="806"/>
    </location>
</feature>
<feature type="sequence variant" id="VAR_051637" description="In dbSNP:rs832582.">
    <original>V</original>
    <variation>I</variation>
    <location>
        <position position="906"/>
    </location>
</feature>
<feature type="sequence conflict" description="In Ref. 2; AAC97073." evidence="16" ref="2">
    <original>T</original>
    <variation>P</variation>
    <location>
        <position position="20"/>
    </location>
</feature>
<feature type="sequence conflict" description="In Ref. 2; AAC97073." evidence="16" ref="2">
    <original>P</original>
    <variation>R</variation>
    <location>
        <position position="37"/>
    </location>
</feature>
<feature type="sequence conflict" description="In Ref. 2; AAC97073." evidence="16" ref="2">
    <original>G</original>
    <variation>R</variation>
    <location>
        <position position="120"/>
    </location>
</feature>
<feature type="sequence conflict" description="In Ref. 2; AAC97073." evidence="16" ref="2">
    <original>R</original>
    <variation>H</variation>
    <location>
        <position position="351"/>
    </location>
</feature>
<feature type="sequence conflict" description="In Ref. 2; AAC97073." evidence="16" ref="2">
    <original>S</original>
    <variation>SV</variation>
    <location>
        <position position="845"/>
    </location>
</feature>
<feature type="sequence conflict" description="In Ref. 2; AAC97073." evidence="16" ref="2">
    <original>I</original>
    <variation>Y</variation>
    <location>
        <position position="859"/>
    </location>
</feature>
<feature type="sequence conflict" description="In Ref. 2; AAC97073." evidence="16" ref="2">
    <original>DGQQDSFLQASVPNNYLETTENSSP</original>
    <variation>QRQQHNSFCRHLFPTTIWKPQRTVPL</variation>
    <location>
        <begin position="878"/>
        <end position="902"/>
    </location>
</feature>
<feature type="sequence conflict" description="In Ref. 2; AAC97073." evidence="16" ref="2">
    <original>S</original>
    <variation>R</variation>
    <location>
        <position position="933"/>
    </location>
</feature>
<feature type="sequence conflict" description="In Ref. 2; AAC97073." evidence="16" ref="2">
    <original>C</original>
    <variation>L</variation>
    <location>
        <position position="1097"/>
    </location>
</feature>
<feature type="sequence conflict" description="In Ref. 2; AAC97073." evidence="16" ref="2">
    <original>AVIP</original>
    <variation>CCYT</variation>
    <location>
        <begin position="1104"/>
        <end position="1107"/>
    </location>
</feature>
<feature type="sequence conflict" description="In Ref. 2; AAC97073." evidence="16" ref="2">
    <original>D</original>
    <variation>V</variation>
    <location>
        <position position="1200"/>
    </location>
</feature>
<feature type="helix" evidence="23">
    <location>
        <begin position="551"/>
        <end position="553"/>
    </location>
</feature>
<feature type="helix" evidence="23">
    <location>
        <begin position="554"/>
        <end position="564"/>
    </location>
</feature>
<feature type="helix" evidence="23">
    <location>
        <begin position="566"/>
        <end position="572"/>
    </location>
</feature>
<feature type="helix" evidence="23">
    <location>
        <begin position="577"/>
        <end position="597"/>
    </location>
</feature>
<feature type="helix" evidence="23">
    <location>
        <begin position="629"/>
        <end position="642"/>
    </location>
</feature>
<feature type="helix" evidence="23">
    <location>
        <begin position="648"/>
        <end position="664"/>
    </location>
</feature>
<feature type="helix" evidence="23">
    <location>
        <begin position="670"/>
        <end position="690"/>
    </location>
</feature>
<feature type="helix" evidence="23">
    <location>
        <begin position="696"/>
        <end position="710"/>
    </location>
</feature>
<feature type="helix" evidence="23">
    <location>
        <begin position="711"/>
        <end position="714"/>
    </location>
</feature>
<feature type="turn" evidence="23">
    <location>
        <begin position="719"/>
        <end position="722"/>
    </location>
</feature>
<feature type="helix" evidence="23">
    <location>
        <begin position="733"/>
        <end position="742"/>
    </location>
</feature>
<feature type="turn" evidence="23">
    <location>
        <begin position="745"/>
        <end position="747"/>
    </location>
</feature>
<feature type="helix" evidence="23">
    <location>
        <begin position="751"/>
        <end position="767"/>
    </location>
</feature>
<feature type="helix" evidence="23">
    <location>
        <begin position="769"/>
        <end position="772"/>
    </location>
</feature>
<feature type="helix" evidence="23">
    <location>
        <begin position="774"/>
        <end position="776"/>
    </location>
</feature>
<feature type="helix" evidence="23">
    <location>
        <begin position="787"/>
        <end position="790"/>
    </location>
</feature>
<feature type="helix" evidence="23">
    <location>
        <begin position="792"/>
        <end position="802"/>
    </location>
</feature>
<feature type="turn" evidence="23">
    <location>
        <begin position="803"/>
        <end position="806"/>
    </location>
</feature>
<feature type="helix" evidence="23">
    <location>
        <begin position="810"/>
        <end position="826"/>
    </location>
</feature>
<feature type="turn" evidence="23">
    <location>
        <begin position="827"/>
        <end position="829"/>
    </location>
</feature>
<feature type="helix" evidence="23">
    <location>
        <begin position="831"/>
        <end position="840"/>
    </location>
</feature>
<feature type="helix" evidence="23">
    <location>
        <begin position="847"/>
        <end position="862"/>
    </location>
</feature>